<proteinExistence type="evidence at protein level"/>
<accession>Q32904</accession>
<accession>P35388</accession>
<evidence type="ECO:0000250" key="1"/>
<evidence type="ECO:0000250" key="2">
    <source>
        <dbReference type="UniProtKB" id="P07371"/>
    </source>
</evidence>
<evidence type="ECO:0000250" key="3">
    <source>
        <dbReference type="UniProtKB" id="P27522"/>
    </source>
</evidence>
<evidence type="ECO:0000255" key="4"/>
<evidence type="ECO:0000269" key="5">
    <source>
    </source>
</evidence>
<evidence type="ECO:0000269" key="6">
    <source>
    </source>
</evidence>
<evidence type="ECO:0000305" key="7"/>
<evidence type="ECO:0000312" key="8">
    <source>
        <dbReference type="EMBL" id="AAA84545.1"/>
    </source>
</evidence>
<evidence type="ECO:0000312" key="9">
    <source>
        <dbReference type="PIR" id="S13975"/>
    </source>
</evidence>
<evidence type="ECO:0007829" key="10">
    <source>
        <dbReference type="PDB" id="3LW5"/>
    </source>
</evidence>
<evidence type="ECO:0007829" key="11">
    <source>
        <dbReference type="PDB" id="4Y28"/>
    </source>
</evidence>
<evidence type="ECO:0007829" key="12">
    <source>
        <dbReference type="PDB" id="5L8R"/>
    </source>
</evidence>
<evidence type="ECO:0007829" key="13">
    <source>
        <dbReference type="PDB" id="6YAC"/>
    </source>
</evidence>
<evidence type="ECO:0007829" key="14">
    <source>
        <dbReference type="PDB" id="6YEZ"/>
    </source>
</evidence>
<evidence type="ECO:0007829" key="15">
    <source>
        <dbReference type="PDB" id="7DKZ"/>
    </source>
</evidence>
<name>CB23_PEA</name>
<dbReference type="EMBL" id="L19651">
    <property type="protein sequence ID" value="AAA84545.1"/>
    <property type="molecule type" value="mRNA"/>
</dbReference>
<dbReference type="PIR" id="S13975">
    <property type="entry name" value="S13975"/>
</dbReference>
<dbReference type="PIR" id="T06411">
    <property type="entry name" value="T06411"/>
</dbReference>
<dbReference type="PDB" id="3LW5">
    <property type="method" value="X-ray"/>
    <property type="resolution" value="3.30 A"/>
    <property type="chains" value="3=84-255"/>
</dbReference>
<dbReference type="PDB" id="4RKU">
    <property type="method" value="X-ray"/>
    <property type="resolution" value="3.00 A"/>
    <property type="chains" value="3=1-275"/>
</dbReference>
<dbReference type="PDB" id="4XK8">
    <property type="method" value="X-ray"/>
    <property type="resolution" value="2.80 A"/>
    <property type="chains" value="3/8=55-272"/>
</dbReference>
<dbReference type="PDB" id="4Y28">
    <property type="method" value="X-ray"/>
    <property type="resolution" value="2.80 A"/>
    <property type="chains" value="3=1-275"/>
</dbReference>
<dbReference type="PDB" id="5L8R">
    <property type="method" value="X-ray"/>
    <property type="resolution" value="2.60 A"/>
    <property type="chains" value="3=1-275"/>
</dbReference>
<dbReference type="PDB" id="6YAC">
    <property type="method" value="EM"/>
    <property type="resolution" value="2.50 A"/>
    <property type="chains" value="3=55-275"/>
</dbReference>
<dbReference type="PDB" id="6YEZ">
    <property type="method" value="EM"/>
    <property type="resolution" value="2.70 A"/>
    <property type="chains" value="3=55-275"/>
</dbReference>
<dbReference type="PDB" id="6ZOO">
    <property type="method" value="EM"/>
    <property type="resolution" value="2.74 A"/>
    <property type="chains" value="3=55-275"/>
</dbReference>
<dbReference type="PDB" id="6ZXS">
    <property type="method" value="X-ray"/>
    <property type="resolution" value="3.00 A"/>
    <property type="chains" value="3=55-275"/>
</dbReference>
<dbReference type="PDB" id="7DKZ">
    <property type="method" value="X-ray"/>
    <property type="resolution" value="2.39 A"/>
    <property type="chains" value="3=1-275"/>
</dbReference>
<dbReference type="PDBsum" id="3LW5"/>
<dbReference type="PDBsum" id="4RKU"/>
<dbReference type="PDBsum" id="4XK8"/>
<dbReference type="PDBsum" id="4Y28"/>
<dbReference type="PDBsum" id="5L8R"/>
<dbReference type="PDBsum" id="6YAC"/>
<dbReference type="PDBsum" id="6YEZ"/>
<dbReference type="PDBsum" id="6ZOO"/>
<dbReference type="PDBsum" id="6ZXS"/>
<dbReference type="PDBsum" id="7DKZ"/>
<dbReference type="EMDB" id="EMD-10746"/>
<dbReference type="EMDB" id="EMD-10798"/>
<dbReference type="EMDB" id="EMD-11326"/>
<dbReference type="SMR" id="Q32904"/>
<dbReference type="DIP" id="DIP-60295N"/>
<dbReference type="IntAct" id="Q32904">
    <property type="interactions" value="20"/>
</dbReference>
<dbReference type="GO" id="GO:0009535">
    <property type="term" value="C:chloroplast thylakoid membrane"/>
    <property type="evidence" value="ECO:0007669"/>
    <property type="project" value="UniProtKB-SubCell"/>
</dbReference>
<dbReference type="GO" id="GO:0009522">
    <property type="term" value="C:photosystem I"/>
    <property type="evidence" value="ECO:0007669"/>
    <property type="project" value="UniProtKB-KW"/>
</dbReference>
<dbReference type="GO" id="GO:0009523">
    <property type="term" value="C:photosystem II"/>
    <property type="evidence" value="ECO:0007669"/>
    <property type="project" value="UniProtKB-KW"/>
</dbReference>
<dbReference type="GO" id="GO:0016168">
    <property type="term" value="F:chlorophyll binding"/>
    <property type="evidence" value="ECO:0007669"/>
    <property type="project" value="UniProtKB-KW"/>
</dbReference>
<dbReference type="GO" id="GO:0046872">
    <property type="term" value="F:metal ion binding"/>
    <property type="evidence" value="ECO:0007669"/>
    <property type="project" value="UniProtKB-KW"/>
</dbReference>
<dbReference type="GO" id="GO:0009765">
    <property type="term" value="P:photosynthesis, light harvesting"/>
    <property type="evidence" value="ECO:0007669"/>
    <property type="project" value="InterPro"/>
</dbReference>
<dbReference type="FunFam" id="1.10.3460.10:FF:000006">
    <property type="entry name" value="Chlorophyll a-b binding protein, chloroplastic"/>
    <property type="match status" value="1"/>
</dbReference>
<dbReference type="Gene3D" id="1.10.3460.10">
    <property type="entry name" value="Chlorophyll a/b binding protein domain"/>
    <property type="match status" value="1"/>
</dbReference>
<dbReference type="InterPro" id="IPR001344">
    <property type="entry name" value="Chloro_AB-bd_pln"/>
</dbReference>
<dbReference type="InterPro" id="IPR022796">
    <property type="entry name" value="Chloroa_b-bind"/>
</dbReference>
<dbReference type="PANTHER" id="PTHR21649">
    <property type="entry name" value="CHLOROPHYLL A/B BINDING PROTEIN"/>
    <property type="match status" value="1"/>
</dbReference>
<dbReference type="Pfam" id="PF00504">
    <property type="entry name" value="Chloroa_b-bind"/>
    <property type="match status" value="1"/>
</dbReference>
<dbReference type="SUPFAM" id="SSF103511">
    <property type="entry name" value="Chlorophyll a-b binding protein"/>
    <property type="match status" value="1"/>
</dbReference>
<reference evidence="8" key="1">
    <citation type="journal article" date="1993" name="Plant Physiol.">
        <title>A pea cDNA clone (Ihca3) encoding the 24-kilodalton light-harvesting protein of photosystem I.</title>
        <authorList>
            <person name="Morishige D.T."/>
            <person name="Anandan S."/>
            <person name="Dreyfuss B.W."/>
            <person name="Williams R.S."/>
            <person name="Ellis R.J."/>
            <person name="Thornber J.P."/>
        </authorList>
    </citation>
    <scope>NUCLEOTIDE SEQUENCE [MRNA]</scope>
    <source>
        <strain evidence="8">cv. Little Marvel</strain>
        <tissue evidence="6">Seedling</tissue>
    </source>
</reference>
<reference evidence="7 9" key="2">
    <citation type="journal article" date="1990" name="Eur. J. Biochem.">
        <title>Dicyclohexylcarbodiimide-binding proteins related to the short circuit of the proton-pumping activity of photosystem II. Identified as light-harvesting chlorophyll-a/b-binding proteins.</title>
        <authorList>
            <person name="Jahns P."/>
            <person name="Junge W."/>
        </authorList>
    </citation>
    <scope>PROTEIN SEQUENCE OF 236-258</scope>
    <scope>FUNCTION</scope>
    <source>
        <tissue evidence="5">Seedling</tissue>
    </source>
</reference>
<sequence>MATQALVSSSSLTFAAEAVRQSFRARSLPSSVGCSRKGLVRAAATPPVKQGGVDRPLWFASKQSLSYLDGSLPGDYGFDPLGLSDPEGTGGFIEPRWLAYGEVINGRFAMLGAVGAIAPEYLGKVGLIPQETALAWFQTGVIPPAGTYNYWADNYTLFVLEMALMGFAEHRRFQDWAKPGSMGKQYFLGLEKGFGGSGNPAYPGGPFFNPLGFGKDEKSLKELKLKEVKNGRLAMLAILGYFIQGLVTGVGPYQNLLDHVADPVNNNVLTSLKFH</sequence>
<comment type="function">
    <text evidence="5 7">The light-harvesting complex (LHC) functions as a light receptor, it captures and delivers excitation energy to photosystems with which it is closely associated.</text>
</comment>
<comment type="function">
    <text evidence="5">May channel protons produced in the catalytic Mn center of water oxidation into the thylakoid lumen.</text>
</comment>
<comment type="cofactor">
    <text evidence="2">Binds at least 14 chlorophylls (8 Chl-a and 6 Chl-b) and carotenoids such as lutein and neoxanthin.</text>
</comment>
<comment type="subunit">
    <text evidence="7">The LHC complex consists of chlorophyll a-b binding proteins.</text>
</comment>
<comment type="subcellular location">
    <subcellularLocation>
        <location evidence="7">Plastid</location>
        <location evidence="7">Chloroplast thylakoid membrane</location>
        <topology evidence="4 7">Single-pass membrane protein</topology>
    </subcellularLocation>
</comment>
<comment type="domain">
    <text evidence="7">The N-terminus of the protein extends into the stroma where it is involved with adhesion of granal membranes and post-translational modifications; both are believed to mediate the distribution of excitation energy between photosystems I and II.</text>
</comment>
<comment type="PTM">
    <text evidence="2">Photoregulated by reversible phosphorylation of its threonine residues.</text>
</comment>
<comment type="similarity">
    <text evidence="4">Belongs to the light-harvesting chlorophyll a/b-binding (LHC) protein family.</text>
</comment>
<organism>
    <name type="scientific">Pisum sativum</name>
    <name type="common">Garden pea</name>
    <name type="synonym">Lathyrus oleraceus</name>
    <dbReference type="NCBI Taxonomy" id="3888"/>
    <lineage>
        <taxon>Eukaryota</taxon>
        <taxon>Viridiplantae</taxon>
        <taxon>Streptophyta</taxon>
        <taxon>Embryophyta</taxon>
        <taxon>Tracheophyta</taxon>
        <taxon>Spermatophyta</taxon>
        <taxon>Magnoliopsida</taxon>
        <taxon>eudicotyledons</taxon>
        <taxon>Gunneridae</taxon>
        <taxon>Pentapetalae</taxon>
        <taxon>rosids</taxon>
        <taxon>fabids</taxon>
        <taxon>Fabales</taxon>
        <taxon>Fabaceae</taxon>
        <taxon>Papilionoideae</taxon>
        <taxon>50 kb inversion clade</taxon>
        <taxon>NPAAA clade</taxon>
        <taxon>Hologalegina</taxon>
        <taxon>IRL clade</taxon>
        <taxon>Fabeae</taxon>
        <taxon>Pisum</taxon>
    </lineage>
</organism>
<keyword id="KW-0002">3D-structure</keyword>
<keyword id="KW-0148">Chlorophyll</keyword>
<keyword id="KW-0150">Chloroplast</keyword>
<keyword id="KW-0157">Chromophore</keyword>
<keyword id="KW-0903">Direct protein sequencing</keyword>
<keyword id="KW-0460">Magnesium</keyword>
<keyword id="KW-0472">Membrane</keyword>
<keyword id="KW-0479">Metal-binding</keyword>
<keyword id="KW-0597">Phosphoprotein</keyword>
<keyword id="KW-0602">Photosynthesis</keyword>
<keyword id="KW-0603">Photosystem I</keyword>
<keyword id="KW-0604">Photosystem II</keyword>
<keyword id="KW-0934">Plastid</keyword>
<keyword id="KW-0793">Thylakoid</keyword>
<keyword id="KW-0809">Transit peptide</keyword>
<keyword id="KW-0812">Transmembrane</keyword>
<keyword id="KW-1133">Transmembrane helix</keyword>
<feature type="transit peptide" description="Chloroplast" evidence="7">
    <location>
        <begin position="1"/>
        <end status="unknown"/>
    </location>
</feature>
<feature type="chain" id="PRO_0000310859" description="Chlorophyll a-b binding protein 3, chloroplastic">
    <location>
        <begin status="unknown"/>
        <end position="275"/>
    </location>
</feature>
<feature type="transmembrane region" description="Helical" evidence="4">
    <location>
        <begin position="233"/>
        <end position="253"/>
    </location>
</feature>
<feature type="binding site" description="axial binding residue" evidence="1">
    <location>
        <position position="58"/>
    </location>
    <ligand>
        <name>chlorophyll b</name>
        <dbReference type="ChEBI" id="CHEBI:61721"/>
        <label>1</label>
    </ligand>
    <ligandPart>
        <name>Mg</name>
        <dbReference type="ChEBI" id="CHEBI:25107"/>
    </ligandPart>
</feature>
<feature type="binding site" evidence="3">
    <location>
        <position position="78"/>
    </location>
    <ligand>
        <name>chlorophyll a</name>
        <dbReference type="ChEBI" id="CHEBI:58416"/>
        <label>1</label>
    </ligand>
</feature>
<feature type="binding site" evidence="2">
    <location>
        <position position="84"/>
    </location>
    <ligand>
        <name>chlorophyll a</name>
        <dbReference type="ChEBI" id="CHEBI:58416"/>
        <label>1</label>
    </ligand>
</feature>
<feature type="binding site" description="axial binding residue" evidence="2">
    <location>
        <position position="102"/>
    </location>
    <ligand>
        <name>chlorophyll a</name>
        <dbReference type="ChEBI" id="CHEBI:58416"/>
        <label>1</label>
    </ligand>
    <ligandPart>
        <name>Mg</name>
        <dbReference type="ChEBI" id="CHEBI:25107"/>
    </ligandPart>
</feature>
<feature type="binding site" evidence="2">
    <location>
        <position position="107"/>
    </location>
    <ligand>
        <name>chlorophyll b</name>
        <dbReference type="ChEBI" id="CHEBI:61721"/>
        <label>2</label>
    </ligand>
</feature>
<feature type="binding site" description="axial binding residue" evidence="1">
    <location>
        <position position="142"/>
    </location>
    <ligand>
        <name>chlorophyll b</name>
        <dbReference type="ChEBI" id="CHEBI:61721"/>
        <label>2</label>
    </ligand>
    <ligandPart>
        <name>Mg</name>
        <dbReference type="ChEBI" id="CHEBI:25107"/>
    </ligandPart>
</feature>
<feature type="binding site" description="axial binding residue" evidence="3">
    <location>
        <position position="169"/>
    </location>
    <ligand>
        <name>chlorophyll b</name>
        <dbReference type="ChEBI" id="CHEBI:61721"/>
        <label>3</label>
    </ligand>
    <ligandPart>
        <name>Mg</name>
        <dbReference type="ChEBI" id="CHEBI:25107"/>
    </ligandPart>
</feature>
<feature type="binding site" evidence="3">
    <location>
        <position position="172"/>
    </location>
    <ligand>
        <name>chlorophyll b</name>
        <dbReference type="ChEBI" id="CHEBI:61721"/>
        <label>4</label>
    </ligand>
</feature>
<feature type="binding site" evidence="2">
    <location>
        <position position="226"/>
    </location>
    <ligand>
        <name>chlorophyll a</name>
        <dbReference type="ChEBI" id="CHEBI:58416"/>
        <label>5</label>
    </ligand>
</feature>
<feature type="binding site" description="axial binding residue" evidence="2">
    <location>
        <position position="227"/>
    </location>
    <ligand>
        <name>chlorophyll a</name>
        <dbReference type="ChEBI" id="CHEBI:58416"/>
        <label>3</label>
    </ligand>
    <ligandPart>
        <name>Mg</name>
        <dbReference type="ChEBI" id="CHEBI:25107"/>
    </ligandPart>
</feature>
<feature type="binding site" description="axial binding residue" evidence="2">
    <location>
        <position position="230"/>
    </location>
    <ligand>
        <name>chlorophyll a</name>
        <dbReference type="ChEBI" id="CHEBI:58416"/>
        <label>4</label>
    </ligand>
    <ligandPart>
        <name>Mg</name>
        <dbReference type="ChEBI" id="CHEBI:25107"/>
    </ligandPart>
</feature>
<feature type="binding site" evidence="2">
    <location>
        <position position="232"/>
    </location>
    <ligand>
        <name>chlorophyll a</name>
        <dbReference type="ChEBI" id="CHEBI:58416"/>
        <label>1</label>
    </ligand>
</feature>
<feature type="binding site" description="axial binding residue" evidence="2">
    <location>
        <position position="244"/>
    </location>
    <ligand>
        <name>chlorophyll a</name>
        <dbReference type="ChEBI" id="CHEBI:58416"/>
        <label>5</label>
    </ligand>
    <ligandPart>
        <name>Mg</name>
        <dbReference type="ChEBI" id="CHEBI:25107"/>
    </ligandPart>
</feature>
<feature type="binding site" description="axial binding residue" evidence="2">
    <location>
        <position position="259"/>
    </location>
    <ligand>
        <name>chlorophyll a</name>
        <dbReference type="ChEBI" id="CHEBI:58416"/>
        <label>6</label>
    </ligand>
    <ligandPart>
        <name>Mg</name>
        <dbReference type="ChEBI" id="CHEBI:25107"/>
    </ligandPart>
</feature>
<feature type="strand" evidence="15">
    <location>
        <begin position="58"/>
        <end position="60"/>
    </location>
</feature>
<feature type="turn" evidence="15">
    <location>
        <begin position="62"/>
        <end position="67"/>
    </location>
</feature>
<feature type="strand" evidence="14">
    <location>
        <begin position="69"/>
        <end position="72"/>
    </location>
</feature>
<feature type="strand" evidence="12">
    <location>
        <begin position="86"/>
        <end position="88"/>
    </location>
</feature>
<feature type="turn" evidence="14">
    <location>
        <begin position="91"/>
        <end position="93"/>
    </location>
</feature>
<feature type="helix" evidence="15">
    <location>
        <begin position="95"/>
        <end position="115"/>
    </location>
</feature>
<feature type="helix" evidence="15">
    <location>
        <begin position="118"/>
        <end position="125"/>
    </location>
</feature>
<feature type="strand" evidence="10">
    <location>
        <begin position="127"/>
        <end position="129"/>
    </location>
</feature>
<feature type="turn" evidence="15">
    <location>
        <begin position="130"/>
        <end position="132"/>
    </location>
</feature>
<feature type="helix" evidence="15">
    <location>
        <begin position="136"/>
        <end position="138"/>
    </location>
</feature>
<feature type="strand" evidence="15">
    <location>
        <begin position="139"/>
        <end position="142"/>
    </location>
</feature>
<feature type="turn" evidence="15">
    <location>
        <begin position="143"/>
        <end position="145"/>
    </location>
</feature>
<feature type="helix" evidence="15">
    <location>
        <begin position="154"/>
        <end position="177"/>
    </location>
</feature>
<feature type="strand" evidence="11">
    <location>
        <begin position="178"/>
        <end position="180"/>
    </location>
</feature>
<feature type="strand" evidence="15">
    <location>
        <begin position="182"/>
        <end position="185"/>
    </location>
</feature>
<feature type="strand" evidence="13">
    <location>
        <begin position="187"/>
        <end position="189"/>
    </location>
</feature>
<feature type="helix" evidence="15">
    <location>
        <begin position="190"/>
        <end position="193"/>
    </location>
</feature>
<feature type="helix" evidence="15">
    <location>
        <begin position="205"/>
        <end position="208"/>
    </location>
</feature>
<feature type="strand" evidence="12">
    <location>
        <begin position="209"/>
        <end position="211"/>
    </location>
</feature>
<feature type="helix" evidence="15">
    <location>
        <begin position="217"/>
        <end position="248"/>
    </location>
</feature>
<feature type="helix" evidence="15">
    <location>
        <begin position="252"/>
        <end position="261"/>
    </location>
</feature>
<feature type="turn" evidence="15">
    <location>
        <begin position="263"/>
        <end position="265"/>
    </location>
</feature>
<feature type="turn" evidence="15">
    <location>
        <begin position="268"/>
        <end position="270"/>
    </location>
</feature>
<protein>
    <recommendedName>
        <fullName>Chlorophyll a-b binding protein 3, chloroplastic</fullName>
    </recommendedName>
    <alternativeName>
        <fullName>LHCII type III CAB-3</fullName>
    </alternativeName>
</protein>
<gene>
    <name evidence="8" type="primary">lhca3</name>
</gene>